<protein>
    <recommendedName>
        <fullName evidence="1">Uridylate kinase</fullName>
        <shortName evidence="1">UK</shortName>
        <ecNumber evidence="1">2.7.4.22</ecNumber>
    </recommendedName>
    <alternativeName>
        <fullName evidence="1">Uridine monophosphate kinase</fullName>
        <shortName evidence="1">UMP kinase</shortName>
        <shortName evidence="1">UMPK</shortName>
    </alternativeName>
</protein>
<accession>A2RG31</accession>
<proteinExistence type="inferred from homology"/>
<keyword id="KW-0021">Allosteric enzyme</keyword>
<keyword id="KW-0067">ATP-binding</keyword>
<keyword id="KW-0963">Cytoplasm</keyword>
<keyword id="KW-0418">Kinase</keyword>
<keyword id="KW-0547">Nucleotide-binding</keyword>
<keyword id="KW-0665">Pyrimidine biosynthesis</keyword>
<keyword id="KW-0808">Transferase</keyword>
<sequence length="242" mass="25896">MEPKYQRILIKLSGEALAGEKGVGIDIPTVQAIAKEIAEVHVSGVQIALVIGGGNLWRGEPAADAGMDRVQADYTGMLGTVMNALVMADSLQHYGVDTRVQTAIPMQNVAEPYIRGRALRHLEKNRIVVFGAGIGSPYFSTDTTAALRAAEIEADAILMAKNGVDGVYNADPKKDANAVKFDELTHGEVIKRGLKIMDATASTLSMDNDIDLVVFNMNEAGNIQRVVFGEHIGTTVSNKVCD</sequence>
<gene>
    <name evidence="1" type="primary">pyrH</name>
    <name type="ordered locus">SpyM51489</name>
</gene>
<reference key="1">
    <citation type="journal article" date="2007" name="J. Bacteriol.">
        <title>Complete genome of acute rheumatic fever-associated serotype M5 Streptococcus pyogenes strain Manfredo.</title>
        <authorList>
            <person name="Holden M.T.G."/>
            <person name="Scott A."/>
            <person name="Cherevach I."/>
            <person name="Chillingworth T."/>
            <person name="Churcher C."/>
            <person name="Cronin A."/>
            <person name="Dowd L."/>
            <person name="Feltwell T."/>
            <person name="Hamlin N."/>
            <person name="Holroyd S."/>
            <person name="Jagels K."/>
            <person name="Moule S."/>
            <person name="Mungall K."/>
            <person name="Quail M.A."/>
            <person name="Price C."/>
            <person name="Rabbinowitsch E."/>
            <person name="Sharp S."/>
            <person name="Skelton J."/>
            <person name="Whitehead S."/>
            <person name="Barrell B.G."/>
            <person name="Kehoe M."/>
            <person name="Parkhill J."/>
        </authorList>
    </citation>
    <scope>NUCLEOTIDE SEQUENCE [LARGE SCALE GENOMIC DNA]</scope>
    <source>
        <strain>Manfredo</strain>
    </source>
</reference>
<name>PYRH_STRPG</name>
<comment type="function">
    <text evidence="1">Catalyzes the reversible phosphorylation of UMP to UDP.</text>
</comment>
<comment type="catalytic activity">
    <reaction evidence="1">
        <text>UMP + ATP = UDP + ADP</text>
        <dbReference type="Rhea" id="RHEA:24400"/>
        <dbReference type="ChEBI" id="CHEBI:30616"/>
        <dbReference type="ChEBI" id="CHEBI:57865"/>
        <dbReference type="ChEBI" id="CHEBI:58223"/>
        <dbReference type="ChEBI" id="CHEBI:456216"/>
        <dbReference type="EC" id="2.7.4.22"/>
    </reaction>
</comment>
<comment type="activity regulation">
    <text evidence="1">Allosterically activated by GTP. Inhibited by UTP.</text>
</comment>
<comment type="pathway">
    <text evidence="1">Pyrimidine metabolism; CTP biosynthesis via de novo pathway; UDP from UMP (UMPK route): step 1/1.</text>
</comment>
<comment type="subunit">
    <text evidence="1">Homohexamer.</text>
</comment>
<comment type="subcellular location">
    <subcellularLocation>
        <location evidence="1">Cytoplasm</location>
    </subcellularLocation>
</comment>
<comment type="similarity">
    <text evidence="1">Belongs to the UMP kinase family.</text>
</comment>
<evidence type="ECO:0000255" key="1">
    <source>
        <dbReference type="HAMAP-Rule" id="MF_01220"/>
    </source>
</evidence>
<feature type="chain" id="PRO_1000054036" description="Uridylate kinase">
    <location>
        <begin position="1"/>
        <end position="242"/>
    </location>
</feature>
<feature type="region of interest" description="Involved in allosteric activation by GTP" evidence="1">
    <location>
        <begin position="19"/>
        <end position="24"/>
    </location>
</feature>
<feature type="binding site" evidence="1">
    <location>
        <begin position="11"/>
        <end position="14"/>
    </location>
    <ligand>
        <name>ATP</name>
        <dbReference type="ChEBI" id="CHEBI:30616"/>
    </ligand>
</feature>
<feature type="binding site" evidence="1">
    <location>
        <position position="53"/>
    </location>
    <ligand>
        <name>UMP</name>
        <dbReference type="ChEBI" id="CHEBI:57865"/>
    </ligand>
</feature>
<feature type="binding site" evidence="1">
    <location>
        <position position="54"/>
    </location>
    <ligand>
        <name>ATP</name>
        <dbReference type="ChEBI" id="CHEBI:30616"/>
    </ligand>
</feature>
<feature type="binding site" evidence="1">
    <location>
        <position position="58"/>
    </location>
    <ligand>
        <name>ATP</name>
        <dbReference type="ChEBI" id="CHEBI:30616"/>
    </ligand>
</feature>
<feature type="binding site" evidence="1">
    <location>
        <position position="73"/>
    </location>
    <ligand>
        <name>UMP</name>
        <dbReference type="ChEBI" id="CHEBI:57865"/>
    </ligand>
</feature>
<feature type="binding site" evidence="1">
    <location>
        <begin position="134"/>
        <end position="141"/>
    </location>
    <ligand>
        <name>UMP</name>
        <dbReference type="ChEBI" id="CHEBI:57865"/>
    </ligand>
</feature>
<feature type="binding site" evidence="1">
    <location>
        <position position="162"/>
    </location>
    <ligand>
        <name>ATP</name>
        <dbReference type="ChEBI" id="CHEBI:30616"/>
    </ligand>
</feature>
<feature type="binding site" evidence="1">
    <location>
        <position position="168"/>
    </location>
    <ligand>
        <name>ATP</name>
        <dbReference type="ChEBI" id="CHEBI:30616"/>
    </ligand>
</feature>
<feature type="binding site" evidence="1">
    <location>
        <position position="171"/>
    </location>
    <ligand>
        <name>ATP</name>
        <dbReference type="ChEBI" id="CHEBI:30616"/>
    </ligand>
</feature>
<dbReference type="EC" id="2.7.4.22" evidence="1"/>
<dbReference type="EMBL" id="AM295007">
    <property type="protein sequence ID" value="CAM30810.1"/>
    <property type="molecule type" value="Genomic_DNA"/>
</dbReference>
<dbReference type="RefSeq" id="WP_002985765.1">
    <property type="nucleotide sequence ID" value="NC_009332.1"/>
</dbReference>
<dbReference type="SMR" id="A2RG31"/>
<dbReference type="GeneID" id="69901300"/>
<dbReference type="KEGG" id="spf:SpyM51489"/>
<dbReference type="HOGENOM" id="CLU_033861_0_0_9"/>
<dbReference type="UniPathway" id="UPA00159">
    <property type="reaction ID" value="UER00275"/>
</dbReference>
<dbReference type="GO" id="GO:0005737">
    <property type="term" value="C:cytoplasm"/>
    <property type="evidence" value="ECO:0007669"/>
    <property type="project" value="UniProtKB-SubCell"/>
</dbReference>
<dbReference type="GO" id="GO:0005524">
    <property type="term" value="F:ATP binding"/>
    <property type="evidence" value="ECO:0007669"/>
    <property type="project" value="UniProtKB-KW"/>
</dbReference>
<dbReference type="GO" id="GO:0033862">
    <property type="term" value="F:UMP kinase activity"/>
    <property type="evidence" value="ECO:0007669"/>
    <property type="project" value="UniProtKB-EC"/>
</dbReference>
<dbReference type="GO" id="GO:0044210">
    <property type="term" value="P:'de novo' CTP biosynthetic process"/>
    <property type="evidence" value="ECO:0007669"/>
    <property type="project" value="UniProtKB-UniRule"/>
</dbReference>
<dbReference type="GO" id="GO:0006225">
    <property type="term" value="P:UDP biosynthetic process"/>
    <property type="evidence" value="ECO:0007669"/>
    <property type="project" value="TreeGrafter"/>
</dbReference>
<dbReference type="CDD" id="cd04254">
    <property type="entry name" value="AAK_UMPK-PyrH-Ec"/>
    <property type="match status" value="1"/>
</dbReference>
<dbReference type="FunFam" id="3.40.1160.10:FF:000019">
    <property type="entry name" value="Uridylate kinase"/>
    <property type="match status" value="1"/>
</dbReference>
<dbReference type="Gene3D" id="3.40.1160.10">
    <property type="entry name" value="Acetylglutamate kinase-like"/>
    <property type="match status" value="1"/>
</dbReference>
<dbReference type="HAMAP" id="MF_01220_B">
    <property type="entry name" value="PyrH_B"/>
    <property type="match status" value="1"/>
</dbReference>
<dbReference type="InterPro" id="IPR036393">
    <property type="entry name" value="AceGlu_kinase-like_sf"/>
</dbReference>
<dbReference type="InterPro" id="IPR001048">
    <property type="entry name" value="Asp/Glu/Uridylate_kinase"/>
</dbReference>
<dbReference type="InterPro" id="IPR011817">
    <property type="entry name" value="Uridylate_kinase"/>
</dbReference>
<dbReference type="InterPro" id="IPR015963">
    <property type="entry name" value="Uridylate_kinase_bac"/>
</dbReference>
<dbReference type="NCBIfam" id="TIGR02075">
    <property type="entry name" value="pyrH_bact"/>
    <property type="match status" value="1"/>
</dbReference>
<dbReference type="PANTHER" id="PTHR42833">
    <property type="entry name" value="URIDYLATE KINASE"/>
    <property type="match status" value="1"/>
</dbReference>
<dbReference type="PANTHER" id="PTHR42833:SF4">
    <property type="entry name" value="URIDYLATE KINASE PUMPKIN, CHLOROPLASTIC"/>
    <property type="match status" value="1"/>
</dbReference>
<dbReference type="Pfam" id="PF00696">
    <property type="entry name" value="AA_kinase"/>
    <property type="match status" value="1"/>
</dbReference>
<dbReference type="PIRSF" id="PIRSF005650">
    <property type="entry name" value="Uridylate_kin"/>
    <property type="match status" value="1"/>
</dbReference>
<dbReference type="SUPFAM" id="SSF53633">
    <property type="entry name" value="Carbamate kinase-like"/>
    <property type="match status" value="1"/>
</dbReference>
<organism>
    <name type="scientific">Streptococcus pyogenes serotype M5 (strain Manfredo)</name>
    <dbReference type="NCBI Taxonomy" id="160491"/>
    <lineage>
        <taxon>Bacteria</taxon>
        <taxon>Bacillati</taxon>
        <taxon>Bacillota</taxon>
        <taxon>Bacilli</taxon>
        <taxon>Lactobacillales</taxon>
        <taxon>Streptococcaceae</taxon>
        <taxon>Streptococcus</taxon>
    </lineage>
</organism>